<keyword id="KW-0240">DNA-directed RNA polymerase</keyword>
<keyword id="KW-0460">Magnesium</keyword>
<keyword id="KW-0479">Metal-binding</keyword>
<keyword id="KW-0548">Nucleotidyltransferase</keyword>
<keyword id="KW-0804">Transcription</keyword>
<keyword id="KW-0808">Transferase</keyword>
<keyword id="KW-0862">Zinc</keyword>
<comment type="function">
    <text evidence="1">DNA-dependent RNA polymerase catalyzes the transcription of DNA into RNA using the four ribonucleoside triphosphates as substrates.</text>
</comment>
<comment type="catalytic activity">
    <reaction evidence="1">
        <text>RNA(n) + a ribonucleoside 5'-triphosphate = RNA(n+1) + diphosphate</text>
        <dbReference type="Rhea" id="RHEA:21248"/>
        <dbReference type="Rhea" id="RHEA-COMP:14527"/>
        <dbReference type="Rhea" id="RHEA-COMP:17342"/>
        <dbReference type="ChEBI" id="CHEBI:33019"/>
        <dbReference type="ChEBI" id="CHEBI:61557"/>
        <dbReference type="ChEBI" id="CHEBI:140395"/>
        <dbReference type="EC" id="2.7.7.6"/>
    </reaction>
</comment>
<comment type="cofactor">
    <cofactor evidence="1">
        <name>Mg(2+)</name>
        <dbReference type="ChEBI" id="CHEBI:18420"/>
    </cofactor>
    <text evidence="1">Binds 1 Mg(2+) ion per subunit.</text>
</comment>
<comment type="cofactor">
    <cofactor evidence="1">
        <name>Zn(2+)</name>
        <dbReference type="ChEBI" id="CHEBI:29105"/>
    </cofactor>
    <text evidence="1">Binds 2 Zn(2+) ions per subunit.</text>
</comment>
<comment type="subunit">
    <text evidence="1">The RNAP catalytic core consists of 2 alpha, 1 beta, 1 beta' and 1 omega subunit. When a sigma factor is associated with the core the holoenzyme is formed, which can initiate transcription.</text>
</comment>
<comment type="similarity">
    <text evidence="1">Belongs to the RNA polymerase beta' chain family.</text>
</comment>
<protein>
    <recommendedName>
        <fullName evidence="1">DNA-directed RNA polymerase subunit beta'</fullName>
        <shortName evidence="1">RNAP subunit beta'</shortName>
        <ecNumber evidence="1">2.7.7.6</ecNumber>
    </recommendedName>
    <alternativeName>
        <fullName evidence="1">RNA polymerase subunit beta'</fullName>
    </alternativeName>
    <alternativeName>
        <fullName evidence="1">Transcriptase subunit beta'</fullName>
    </alternativeName>
</protein>
<feature type="chain" id="PRO_1000051986" description="DNA-directed RNA polymerase subunit beta'">
    <location>
        <begin position="1"/>
        <end position="1405"/>
    </location>
</feature>
<feature type="binding site" evidence="1">
    <location>
        <position position="70"/>
    </location>
    <ligand>
        <name>Zn(2+)</name>
        <dbReference type="ChEBI" id="CHEBI:29105"/>
        <label>1</label>
    </ligand>
</feature>
<feature type="binding site" evidence="1">
    <location>
        <position position="72"/>
    </location>
    <ligand>
        <name>Zn(2+)</name>
        <dbReference type="ChEBI" id="CHEBI:29105"/>
        <label>1</label>
    </ligand>
</feature>
<feature type="binding site" evidence="1">
    <location>
        <position position="85"/>
    </location>
    <ligand>
        <name>Zn(2+)</name>
        <dbReference type="ChEBI" id="CHEBI:29105"/>
        <label>1</label>
    </ligand>
</feature>
<feature type="binding site" evidence="1">
    <location>
        <position position="88"/>
    </location>
    <ligand>
        <name>Zn(2+)</name>
        <dbReference type="ChEBI" id="CHEBI:29105"/>
        <label>1</label>
    </ligand>
</feature>
<feature type="binding site" evidence="1">
    <location>
        <position position="460"/>
    </location>
    <ligand>
        <name>Mg(2+)</name>
        <dbReference type="ChEBI" id="CHEBI:18420"/>
    </ligand>
</feature>
<feature type="binding site" evidence="1">
    <location>
        <position position="462"/>
    </location>
    <ligand>
        <name>Mg(2+)</name>
        <dbReference type="ChEBI" id="CHEBI:18420"/>
    </ligand>
</feature>
<feature type="binding site" evidence="1">
    <location>
        <position position="464"/>
    </location>
    <ligand>
        <name>Mg(2+)</name>
        <dbReference type="ChEBI" id="CHEBI:18420"/>
    </ligand>
</feature>
<feature type="binding site" evidence="1">
    <location>
        <position position="814"/>
    </location>
    <ligand>
        <name>Zn(2+)</name>
        <dbReference type="ChEBI" id="CHEBI:29105"/>
        <label>2</label>
    </ligand>
</feature>
<feature type="binding site" evidence="1">
    <location>
        <position position="888"/>
    </location>
    <ligand>
        <name>Zn(2+)</name>
        <dbReference type="ChEBI" id="CHEBI:29105"/>
        <label>2</label>
    </ligand>
</feature>
<feature type="binding site" evidence="1">
    <location>
        <position position="895"/>
    </location>
    <ligand>
        <name>Zn(2+)</name>
        <dbReference type="ChEBI" id="CHEBI:29105"/>
        <label>2</label>
    </ligand>
</feature>
<feature type="binding site" evidence="1">
    <location>
        <position position="898"/>
    </location>
    <ligand>
        <name>Zn(2+)</name>
        <dbReference type="ChEBI" id="CHEBI:29105"/>
        <label>2</label>
    </ligand>
</feature>
<evidence type="ECO:0000255" key="1">
    <source>
        <dbReference type="HAMAP-Rule" id="MF_01322"/>
    </source>
</evidence>
<accession>A6WHS2</accession>
<gene>
    <name evidence="1" type="primary">rpoC</name>
    <name type="ordered locus">Shew185_0190</name>
</gene>
<name>RPOC_SHEB8</name>
<dbReference type="EC" id="2.7.7.6" evidence="1"/>
<dbReference type="EMBL" id="CP000753">
    <property type="protein sequence ID" value="ABS06361.1"/>
    <property type="molecule type" value="Genomic_DNA"/>
</dbReference>
<dbReference type="RefSeq" id="WP_006083606.1">
    <property type="nucleotide sequence ID" value="NC_009665.1"/>
</dbReference>
<dbReference type="SMR" id="A6WHS2"/>
<dbReference type="GeneID" id="11774507"/>
<dbReference type="KEGG" id="sbm:Shew185_0190"/>
<dbReference type="HOGENOM" id="CLU_000524_3_1_6"/>
<dbReference type="GO" id="GO:0000428">
    <property type="term" value="C:DNA-directed RNA polymerase complex"/>
    <property type="evidence" value="ECO:0007669"/>
    <property type="project" value="UniProtKB-KW"/>
</dbReference>
<dbReference type="GO" id="GO:0003677">
    <property type="term" value="F:DNA binding"/>
    <property type="evidence" value="ECO:0007669"/>
    <property type="project" value="UniProtKB-UniRule"/>
</dbReference>
<dbReference type="GO" id="GO:0003899">
    <property type="term" value="F:DNA-directed RNA polymerase activity"/>
    <property type="evidence" value="ECO:0007669"/>
    <property type="project" value="UniProtKB-UniRule"/>
</dbReference>
<dbReference type="GO" id="GO:0000287">
    <property type="term" value="F:magnesium ion binding"/>
    <property type="evidence" value="ECO:0007669"/>
    <property type="project" value="UniProtKB-UniRule"/>
</dbReference>
<dbReference type="GO" id="GO:0008270">
    <property type="term" value="F:zinc ion binding"/>
    <property type="evidence" value="ECO:0007669"/>
    <property type="project" value="UniProtKB-UniRule"/>
</dbReference>
<dbReference type="GO" id="GO:0006351">
    <property type="term" value="P:DNA-templated transcription"/>
    <property type="evidence" value="ECO:0007669"/>
    <property type="project" value="UniProtKB-UniRule"/>
</dbReference>
<dbReference type="CDD" id="cd02655">
    <property type="entry name" value="RNAP_beta'_C"/>
    <property type="match status" value="1"/>
</dbReference>
<dbReference type="CDD" id="cd01609">
    <property type="entry name" value="RNAP_beta'_N"/>
    <property type="match status" value="1"/>
</dbReference>
<dbReference type="FunFam" id="1.10.132.30:FF:000003">
    <property type="entry name" value="DNA-directed RNA polymerase subunit beta"/>
    <property type="match status" value="1"/>
</dbReference>
<dbReference type="FunFam" id="1.10.150.390:FF:000002">
    <property type="entry name" value="DNA-directed RNA polymerase subunit beta"/>
    <property type="match status" value="1"/>
</dbReference>
<dbReference type="FunFam" id="1.10.40.90:FF:000001">
    <property type="entry name" value="DNA-directed RNA polymerase subunit beta"/>
    <property type="match status" value="1"/>
</dbReference>
<dbReference type="FunFam" id="4.10.860.120:FF:000001">
    <property type="entry name" value="DNA-directed RNA polymerase subunit beta"/>
    <property type="match status" value="1"/>
</dbReference>
<dbReference type="Gene3D" id="1.10.132.30">
    <property type="match status" value="1"/>
</dbReference>
<dbReference type="Gene3D" id="1.10.150.390">
    <property type="match status" value="1"/>
</dbReference>
<dbReference type="Gene3D" id="1.10.1790.20">
    <property type="match status" value="1"/>
</dbReference>
<dbReference type="Gene3D" id="1.10.40.90">
    <property type="match status" value="1"/>
</dbReference>
<dbReference type="Gene3D" id="2.40.40.20">
    <property type="match status" value="1"/>
</dbReference>
<dbReference type="Gene3D" id="2.40.50.100">
    <property type="match status" value="3"/>
</dbReference>
<dbReference type="Gene3D" id="4.10.860.120">
    <property type="entry name" value="RNA polymerase II, clamp domain"/>
    <property type="match status" value="1"/>
</dbReference>
<dbReference type="Gene3D" id="1.10.274.100">
    <property type="entry name" value="RNA polymerase Rpb1, domain 3"/>
    <property type="match status" value="1"/>
</dbReference>
<dbReference type="HAMAP" id="MF_01322">
    <property type="entry name" value="RNApol_bact_RpoC"/>
    <property type="match status" value="1"/>
</dbReference>
<dbReference type="InterPro" id="IPR045867">
    <property type="entry name" value="DNA-dir_RpoC_beta_prime"/>
</dbReference>
<dbReference type="InterPro" id="IPR012754">
    <property type="entry name" value="DNA-dir_RpoC_beta_prime_bact"/>
</dbReference>
<dbReference type="InterPro" id="IPR000722">
    <property type="entry name" value="RNA_pol_asu"/>
</dbReference>
<dbReference type="InterPro" id="IPR006592">
    <property type="entry name" value="RNA_pol_N"/>
</dbReference>
<dbReference type="InterPro" id="IPR007080">
    <property type="entry name" value="RNA_pol_Rpb1_1"/>
</dbReference>
<dbReference type="InterPro" id="IPR007066">
    <property type="entry name" value="RNA_pol_Rpb1_3"/>
</dbReference>
<dbReference type="InterPro" id="IPR042102">
    <property type="entry name" value="RNA_pol_Rpb1_3_sf"/>
</dbReference>
<dbReference type="InterPro" id="IPR007083">
    <property type="entry name" value="RNA_pol_Rpb1_4"/>
</dbReference>
<dbReference type="InterPro" id="IPR007081">
    <property type="entry name" value="RNA_pol_Rpb1_5"/>
</dbReference>
<dbReference type="InterPro" id="IPR044893">
    <property type="entry name" value="RNA_pol_Rpb1_clamp_domain"/>
</dbReference>
<dbReference type="InterPro" id="IPR038120">
    <property type="entry name" value="Rpb1_funnel_sf"/>
</dbReference>
<dbReference type="NCBIfam" id="TIGR02386">
    <property type="entry name" value="rpoC_TIGR"/>
    <property type="match status" value="1"/>
</dbReference>
<dbReference type="PANTHER" id="PTHR19376">
    <property type="entry name" value="DNA-DIRECTED RNA POLYMERASE"/>
    <property type="match status" value="1"/>
</dbReference>
<dbReference type="PANTHER" id="PTHR19376:SF54">
    <property type="entry name" value="DNA-DIRECTED RNA POLYMERASE SUBUNIT BETA"/>
    <property type="match status" value="1"/>
</dbReference>
<dbReference type="Pfam" id="PF04997">
    <property type="entry name" value="RNA_pol_Rpb1_1"/>
    <property type="match status" value="1"/>
</dbReference>
<dbReference type="Pfam" id="PF00623">
    <property type="entry name" value="RNA_pol_Rpb1_2"/>
    <property type="match status" value="2"/>
</dbReference>
<dbReference type="Pfam" id="PF04983">
    <property type="entry name" value="RNA_pol_Rpb1_3"/>
    <property type="match status" value="1"/>
</dbReference>
<dbReference type="Pfam" id="PF05000">
    <property type="entry name" value="RNA_pol_Rpb1_4"/>
    <property type="match status" value="1"/>
</dbReference>
<dbReference type="Pfam" id="PF04998">
    <property type="entry name" value="RNA_pol_Rpb1_5"/>
    <property type="match status" value="1"/>
</dbReference>
<dbReference type="SMART" id="SM00663">
    <property type="entry name" value="RPOLA_N"/>
    <property type="match status" value="1"/>
</dbReference>
<dbReference type="SUPFAM" id="SSF64484">
    <property type="entry name" value="beta and beta-prime subunits of DNA dependent RNA-polymerase"/>
    <property type="match status" value="1"/>
</dbReference>
<sequence length="1405" mass="155316">MKDLLKFLKQQSKTEEFNGIKIGLASPDLIRSWSFGEVKKPETINYRTFKPEREGLFCARIFGPVKDYECLCGKYKRLKHRGVICEKCGVEVTQTKVRRERMGHIELASPVAHIWFLKSLPSRIGLMLDMTLRDIERVLYFESFVVIEPGMTSLERGQMLTEETYLDALEEYGDEFEAKMGAEAVLELLRAIDLAKEIEQMREELPSINSETRRKKVTKRLKLMEAFYTSGNKPEWMILKVLPVLPPDLRPLVPLDGGRFATSDLNDLYRRVINRNNRLKRLLDLAAPDIIVRNEKRMLQESVDALLDNGRRGRAITGSNKRPLKSLADMIKGKQGRFRQNLLGKRVDYSGRSVITVGPTLRLHQCGLPKKMALELFKPFIYGKLEGRGLATTIKAAKKMVEREVAEVWDVLDEVIREHPVMLNRAPTLHRLGIQAFEPVLIEGKAIQLHPLVCAAYNADFDGDQMAVHVPLTLEAQLEARALMMSTNNILSPANGEPVITPSQDVVLGLYYTSRERINGRGEGMAFMSVAEVEKAYATGAAELHARVKVRITETIIGDTGERTEQRRIVDTTVGRALLSLILPAGLSFDLVNQNMGKKQISKLLNTCYRQLGLKDTVIFADQLMYTGFRFATISGASVGIDDMVIPDEKYTLVADAEAEVLEIQEQFQSGLVTAGERYNKVIDIWASANEKVSKAMMENLSTETVINRDGVEEKQASFNSIYMMADSGARGSAAQIRQLAGMRGLMAKPDGSIIETPITANFREGLNVLQYFISTHGARKGLADTALKTANSGYLTRRLVDVAQDLVVIEDDCGTHEGLTMKPLIEGGDVVEPLRERVLGRVVALDVFYPGTEDVLAPRNTLLDEAWCDKLEEYSIDEVIVRSVISCDTDFGVCAACYGRDLARGHIINHGEAIGVVAAQSIGEPGTQLTMRTFHIGGAASRASAENNVQVKNSGSLKLHNAKHVTNSDGKLVIVSRSSELAVIDELGREKERYKVPYGTVLEKLEEAAVEAGDVIANWDPHTHPIISEVAGSIKFVDMIDGVTMTRQTDELTGLSSIVILDVGQRGTAGKEMRPMIRLLGANGADLMIPGTEVPAQYFLPGSAIVNLEDNAQINVGDALARIPQESSKTRDITGGLPRVADLFEARKPKEPAILAEISGTISFGKETKGKRRLVITPADGGDHYEEMIPKWRNLNVFEGEKVERGEVIADGPEAAHDILRLRGIHNVANYIVNEVQDVYRLQGVKINDKHIEVIIRQMLRKCLITSAGDTDFLEGEQAEVSRVKIANRELIAQGKVPATFERELLGITKASLATESFISAASFQETTRVLTEAAVGGKSDQLRGLKENVIVGRLIPAGTGYAYHKTRNEARAKKNEPVVVNKITASEAEQNLADLLNLAGSQD</sequence>
<reference key="1">
    <citation type="submission" date="2007-07" db="EMBL/GenBank/DDBJ databases">
        <title>Complete sequence of chromosome of Shewanella baltica OS185.</title>
        <authorList>
            <consortium name="US DOE Joint Genome Institute"/>
            <person name="Copeland A."/>
            <person name="Lucas S."/>
            <person name="Lapidus A."/>
            <person name="Barry K."/>
            <person name="Glavina del Rio T."/>
            <person name="Dalin E."/>
            <person name="Tice H."/>
            <person name="Pitluck S."/>
            <person name="Sims D."/>
            <person name="Brettin T."/>
            <person name="Bruce D."/>
            <person name="Detter J.C."/>
            <person name="Han C."/>
            <person name="Schmutz J."/>
            <person name="Larimer F."/>
            <person name="Land M."/>
            <person name="Hauser L."/>
            <person name="Kyrpides N."/>
            <person name="Mikhailova N."/>
            <person name="Brettar I."/>
            <person name="Rodrigues J."/>
            <person name="Konstantinidis K."/>
            <person name="Tiedje J."/>
            <person name="Richardson P."/>
        </authorList>
    </citation>
    <scope>NUCLEOTIDE SEQUENCE [LARGE SCALE GENOMIC DNA]</scope>
    <source>
        <strain>OS185</strain>
    </source>
</reference>
<organism>
    <name type="scientific">Shewanella baltica (strain OS185)</name>
    <dbReference type="NCBI Taxonomy" id="402882"/>
    <lineage>
        <taxon>Bacteria</taxon>
        <taxon>Pseudomonadati</taxon>
        <taxon>Pseudomonadota</taxon>
        <taxon>Gammaproteobacteria</taxon>
        <taxon>Alteromonadales</taxon>
        <taxon>Shewanellaceae</taxon>
        <taxon>Shewanella</taxon>
    </lineage>
</organism>
<proteinExistence type="inferred from homology"/>